<proteinExistence type="inferred from homology"/>
<evidence type="ECO:0000255" key="1">
    <source>
        <dbReference type="HAMAP-Rule" id="MF_00446"/>
    </source>
</evidence>
<reference key="1">
    <citation type="journal article" date="2006" name="J. Bacteriol.">
        <title>Pathogenomic sequence analysis of Bacillus cereus and Bacillus thuringiensis isolates closely related to Bacillus anthracis.</title>
        <authorList>
            <person name="Han C.S."/>
            <person name="Xie G."/>
            <person name="Challacombe J.F."/>
            <person name="Altherr M.R."/>
            <person name="Bhotika S.S."/>
            <person name="Bruce D."/>
            <person name="Campbell C.S."/>
            <person name="Campbell M.L."/>
            <person name="Chen J."/>
            <person name="Chertkov O."/>
            <person name="Cleland C."/>
            <person name="Dimitrijevic M."/>
            <person name="Doggett N.A."/>
            <person name="Fawcett J.J."/>
            <person name="Glavina T."/>
            <person name="Goodwin L.A."/>
            <person name="Hill K.K."/>
            <person name="Hitchcock P."/>
            <person name="Jackson P.J."/>
            <person name="Keim P."/>
            <person name="Kewalramani A.R."/>
            <person name="Longmire J."/>
            <person name="Lucas S."/>
            <person name="Malfatti S."/>
            <person name="McMurry K."/>
            <person name="Meincke L.J."/>
            <person name="Misra M."/>
            <person name="Moseman B.L."/>
            <person name="Mundt M."/>
            <person name="Munk A.C."/>
            <person name="Okinaka R.T."/>
            <person name="Parson-Quintana B."/>
            <person name="Reilly L.P."/>
            <person name="Richardson P."/>
            <person name="Robinson D.L."/>
            <person name="Rubin E."/>
            <person name="Saunders E."/>
            <person name="Tapia R."/>
            <person name="Tesmer J.G."/>
            <person name="Thayer N."/>
            <person name="Thompson L.S."/>
            <person name="Tice H."/>
            <person name="Ticknor L.O."/>
            <person name="Wills P.L."/>
            <person name="Brettin T.S."/>
            <person name="Gilna P."/>
        </authorList>
    </citation>
    <scope>NUCLEOTIDE SEQUENCE [LARGE SCALE GENOMIC DNA]</scope>
    <source>
        <strain>ZK / E33L</strain>
    </source>
</reference>
<name>PAND_BACCZ</name>
<protein>
    <recommendedName>
        <fullName evidence="1">Aspartate 1-decarboxylase</fullName>
        <ecNumber evidence="1">4.1.1.11</ecNumber>
    </recommendedName>
    <alternativeName>
        <fullName evidence="1">Aspartate alpha-decarboxylase</fullName>
    </alternativeName>
    <component>
        <recommendedName>
            <fullName evidence="1">Aspartate 1-decarboxylase beta chain</fullName>
        </recommendedName>
    </component>
    <component>
        <recommendedName>
            <fullName evidence="1">Aspartate 1-decarboxylase alpha chain</fullName>
        </recommendedName>
    </component>
</protein>
<comment type="function">
    <text evidence="1">Catalyzes the pyruvoyl-dependent decarboxylation of aspartate to produce beta-alanine.</text>
</comment>
<comment type="catalytic activity">
    <reaction evidence="1">
        <text>L-aspartate + H(+) = beta-alanine + CO2</text>
        <dbReference type="Rhea" id="RHEA:19497"/>
        <dbReference type="ChEBI" id="CHEBI:15378"/>
        <dbReference type="ChEBI" id="CHEBI:16526"/>
        <dbReference type="ChEBI" id="CHEBI:29991"/>
        <dbReference type="ChEBI" id="CHEBI:57966"/>
        <dbReference type="EC" id="4.1.1.11"/>
    </reaction>
</comment>
<comment type="cofactor">
    <cofactor evidence="1">
        <name>pyruvate</name>
        <dbReference type="ChEBI" id="CHEBI:15361"/>
    </cofactor>
    <text evidence="1">Binds 1 pyruvoyl group covalently per subunit.</text>
</comment>
<comment type="pathway">
    <text evidence="1">Cofactor biosynthesis; (R)-pantothenate biosynthesis; beta-alanine from L-aspartate: step 1/1.</text>
</comment>
<comment type="subunit">
    <text evidence="1">Heterooctamer of four alpha and four beta subunits.</text>
</comment>
<comment type="subcellular location">
    <subcellularLocation>
        <location evidence="1">Cytoplasm</location>
    </subcellularLocation>
</comment>
<comment type="PTM">
    <text evidence="1">Is synthesized initially as an inactive proenzyme, which is activated by self-cleavage at a specific serine bond to produce a beta-subunit with a hydroxyl group at its C-terminus and an alpha-subunit with a pyruvoyl group at its N-terminus.</text>
</comment>
<comment type="similarity">
    <text evidence="1">Belongs to the PanD family.</text>
</comment>
<accession>Q63DJ1</accession>
<gene>
    <name evidence="1" type="primary">panD</name>
    <name type="ordered locus">BCE33L1424</name>
</gene>
<dbReference type="EC" id="4.1.1.11" evidence="1"/>
<dbReference type="EMBL" id="CP000001">
    <property type="protein sequence ID" value="AAU18826.1"/>
    <property type="molecule type" value="Genomic_DNA"/>
</dbReference>
<dbReference type="RefSeq" id="WP_000490176.1">
    <property type="nucleotide sequence ID" value="NZ_CP009968.1"/>
</dbReference>
<dbReference type="SMR" id="Q63DJ1"/>
<dbReference type="GeneID" id="75084853"/>
<dbReference type="KEGG" id="bcz:BCE33L1424"/>
<dbReference type="PATRIC" id="fig|288681.22.peg.4129"/>
<dbReference type="UniPathway" id="UPA00028">
    <property type="reaction ID" value="UER00002"/>
</dbReference>
<dbReference type="Proteomes" id="UP000002612">
    <property type="component" value="Chromosome"/>
</dbReference>
<dbReference type="GO" id="GO:0005829">
    <property type="term" value="C:cytosol"/>
    <property type="evidence" value="ECO:0007669"/>
    <property type="project" value="TreeGrafter"/>
</dbReference>
<dbReference type="GO" id="GO:0004068">
    <property type="term" value="F:aspartate 1-decarboxylase activity"/>
    <property type="evidence" value="ECO:0007669"/>
    <property type="project" value="UniProtKB-UniRule"/>
</dbReference>
<dbReference type="GO" id="GO:0006523">
    <property type="term" value="P:alanine biosynthetic process"/>
    <property type="evidence" value="ECO:0007669"/>
    <property type="project" value="InterPro"/>
</dbReference>
<dbReference type="GO" id="GO:0015940">
    <property type="term" value="P:pantothenate biosynthetic process"/>
    <property type="evidence" value="ECO:0007669"/>
    <property type="project" value="UniProtKB-UniRule"/>
</dbReference>
<dbReference type="CDD" id="cd06919">
    <property type="entry name" value="Asp_decarbox"/>
    <property type="match status" value="1"/>
</dbReference>
<dbReference type="Gene3D" id="2.40.40.20">
    <property type="match status" value="1"/>
</dbReference>
<dbReference type="HAMAP" id="MF_00446">
    <property type="entry name" value="PanD"/>
    <property type="match status" value="1"/>
</dbReference>
<dbReference type="InterPro" id="IPR009010">
    <property type="entry name" value="Asp_de-COase-like_dom_sf"/>
</dbReference>
<dbReference type="InterPro" id="IPR003190">
    <property type="entry name" value="Asp_decarbox"/>
</dbReference>
<dbReference type="NCBIfam" id="TIGR00223">
    <property type="entry name" value="panD"/>
    <property type="match status" value="1"/>
</dbReference>
<dbReference type="PANTHER" id="PTHR21012">
    <property type="entry name" value="ASPARTATE 1-DECARBOXYLASE"/>
    <property type="match status" value="1"/>
</dbReference>
<dbReference type="PANTHER" id="PTHR21012:SF0">
    <property type="entry name" value="ASPARTATE 1-DECARBOXYLASE"/>
    <property type="match status" value="1"/>
</dbReference>
<dbReference type="Pfam" id="PF02261">
    <property type="entry name" value="Asp_decarbox"/>
    <property type="match status" value="1"/>
</dbReference>
<dbReference type="PIRSF" id="PIRSF006246">
    <property type="entry name" value="Asp_decarbox"/>
    <property type="match status" value="1"/>
</dbReference>
<dbReference type="SUPFAM" id="SSF50692">
    <property type="entry name" value="ADC-like"/>
    <property type="match status" value="1"/>
</dbReference>
<sequence length="127" mass="13909">MFRTMMRAKLHRATVTEANLNYVGSITIDEDLMDAVNIVENEKVQIVNNNNGARLETYVIKGERGSGVVCLNGAAARLVQPGDKVIIICYGLVAEENIHKQEPKIAVLDDDNQIIEMLGAEKAGTIL</sequence>
<keyword id="KW-0068">Autocatalytic cleavage</keyword>
<keyword id="KW-0963">Cytoplasm</keyword>
<keyword id="KW-0210">Decarboxylase</keyword>
<keyword id="KW-0456">Lyase</keyword>
<keyword id="KW-0566">Pantothenate biosynthesis</keyword>
<keyword id="KW-0670">Pyruvate</keyword>
<keyword id="KW-0704">Schiff base</keyword>
<keyword id="KW-0865">Zymogen</keyword>
<feature type="chain" id="PRO_0000023023" description="Aspartate 1-decarboxylase beta chain" evidence="1">
    <location>
        <begin position="1"/>
        <end position="24"/>
    </location>
</feature>
<feature type="chain" id="PRO_0000023024" description="Aspartate 1-decarboxylase alpha chain" evidence="1">
    <location>
        <begin position="25"/>
        <end position="127"/>
    </location>
</feature>
<feature type="active site" description="Schiff-base intermediate with substrate; via pyruvic acid" evidence="1">
    <location>
        <position position="25"/>
    </location>
</feature>
<feature type="active site" description="Proton donor" evidence="1">
    <location>
        <position position="58"/>
    </location>
</feature>
<feature type="binding site" evidence="1">
    <location>
        <position position="57"/>
    </location>
    <ligand>
        <name>substrate</name>
    </ligand>
</feature>
<feature type="binding site" evidence="1">
    <location>
        <begin position="73"/>
        <end position="75"/>
    </location>
    <ligand>
        <name>substrate</name>
    </ligand>
</feature>
<feature type="modified residue" description="Pyruvic acid (Ser)" evidence="1">
    <location>
        <position position="25"/>
    </location>
</feature>
<organism>
    <name type="scientific">Bacillus cereus (strain ZK / E33L)</name>
    <dbReference type="NCBI Taxonomy" id="288681"/>
    <lineage>
        <taxon>Bacteria</taxon>
        <taxon>Bacillati</taxon>
        <taxon>Bacillota</taxon>
        <taxon>Bacilli</taxon>
        <taxon>Bacillales</taxon>
        <taxon>Bacillaceae</taxon>
        <taxon>Bacillus</taxon>
        <taxon>Bacillus cereus group</taxon>
    </lineage>
</organism>